<evidence type="ECO:0000255" key="1">
    <source>
        <dbReference type="PROSITE-ProRule" id="PRU00345"/>
    </source>
</evidence>
<evidence type="ECO:0000269" key="2">
    <source>
    </source>
</evidence>
<evidence type="ECO:0000269" key="3">
    <source>
    </source>
</evidence>
<evidence type="ECO:0000269" key="4">
    <source>
    </source>
</evidence>
<evidence type="ECO:0000305" key="5">
    <source>
    </source>
</evidence>
<evidence type="ECO:0007829" key="6">
    <source>
        <dbReference type="PDB" id="3TGN"/>
    </source>
</evidence>
<dbReference type="EMBL" id="CP000410">
    <property type="protein sequence ID" value="ABJ54931.1"/>
    <property type="molecule type" value="Genomic_DNA"/>
</dbReference>
<dbReference type="RefSeq" id="WP_001249319.1">
    <property type="nucleotide sequence ID" value="NZ_JAMLJR010000007.1"/>
</dbReference>
<dbReference type="PDB" id="3TGN">
    <property type="method" value="X-ray"/>
    <property type="resolution" value="2.00 A"/>
    <property type="chains" value="A/B=1-146"/>
</dbReference>
<dbReference type="PDBsum" id="3TGN"/>
<dbReference type="BMRB" id="Q04I02"/>
<dbReference type="SMR" id="Q04I02"/>
<dbReference type="PaxDb" id="373153-SPD_2000"/>
<dbReference type="GeneID" id="45652603"/>
<dbReference type="KEGG" id="spd:SPD_2000"/>
<dbReference type="eggNOG" id="COG1846">
    <property type="taxonomic scope" value="Bacteria"/>
</dbReference>
<dbReference type="HOGENOM" id="CLU_142321_1_0_9"/>
<dbReference type="BioCyc" id="SPNE373153:G1G6V-2146-MONOMER"/>
<dbReference type="EvolutionaryTrace" id="Q04I02"/>
<dbReference type="Proteomes" id="UP000001452">
    <property type="component" value="Chromosome"/>
</dbReference>
<dbReference type="GO" id="GO:0003677">
    <property type="term" value="F:DNA binding"/>
    <property type="evidence" value="ECO:0007669"/>
    <property type="project" value="UniProtKB-KW"/>
</dbReference>
<dbReference type="GO" id="GO:0003700">
    <property type="term" value="F:DNA-binding transcription factor activity"/>
    <property type="evidence" value="ECO:0007669"/>
    <property type="project" value="InterPro"/>
</dbReference>
<dbReference type="GO" id="GO:0008270">
    <property type="term" value="F:zinc ion binding"/>
    <property type="evidence" value="ECO:0007669"/>
    <property type="project" value="InterPro"/>
</dbReference>
<dbReference type="CDD" id="cd00090">
    <property type="entry name" value="HTH_ARSR"/>
    <property type="match status" value="1"/>
</dbReference>
<dbReference type="FunFam" id="1.10.10.10:FF:000417">
    <property type="entry name" value="Transcriptional regulator, MarR family"/>
    <property type="match status" value="1"/>
</dbReference>
<dbReference type="Gene3D" id="6.10.140.1680">
    <property type="match status" value="1"/>
</dbReference>
<dbReference type="Gene3D" id="6.10.250.2360">
    <property type="match status" value="1"/>
</dbReference>
<dbReference type="Gene3D" id="1.10.10.10">
    <property type="entry name" value="Winged helix-like DNA-binding domain superfamily/Winged helix DNA-binding domain"/>
    <property type="match status" value="1"/>
</dbReference>
<dbReference type="InterPro" id="IPR047894">
    <property type="entry name" value="AdcR-like"/>
</dbReference>
<dbReference type="InterPro" id="IPR011991">
    <property type="entry name" value="ArsR-like_HTH"/>
</dbReference>
<dbReference type="InterPro" id="IPR001845">
    <property type="entry name" value="HTH_ArsR_DNA-bd_dom"/>
</dbReference>
<dbReference type="InterPro" id="IPR000835">
    <property type="entry name" value="HTH_MarR-typ"/>
</dbReference>
<dbReference type="InterPro" id="IPR052067">
    <property type="entry name" value="Metal_resp_HTH_trans_reg"/>
</dbReference>
<dbReference type="InterPro" id="IPR036388">
    <property type="entry name" value="WH-like_DNA-bd_sf"/>
</dbReference>
<dbReference type="InterPro" id="IPR036390">
    <property type="entry name" value="WH_DNA-bd_sf"/>
</dbReference>
<dbReference type="NCBIfam" id="NF038251">
    <property type="entry name" value="AdcR_fam_Zn_TF"/>
    <property type="match status" value="1"/>
</dbReference>
<dbReference type="PANTHER" id="PTHR35790">
    <property type="entry name" value="HTH-TYPE TRANSCRIPTIONAL REGULATOR PCHR"/>
    <property type="match status" value="1"/>
</dbReference>
<dbReference type="PANTHER" id="PTHR35790:SF4">
    <property type="entry name" value="HTH-TYPE TRANSCRIPTIONAL REGULATOR PCHR"/>
    <property type="match status" value="1"/>
</dbReference>
<dbReference type="Pfam" id="PF01047">
    <property type="entry name" value="MarR"/>
    <property type="match status" value="1"/>
</dbReference>
<dbReference type="SMART" id="SM00418">
    <property type="entry name" value="HTH_ARSR"/>
    <property type="match status" value="1"/>
</dbReference>
<dbReference type="SMART" id="SM00347">
    <property type="entry name" value="HTH_MARR"/>
    <property type="match status" value="1"/>
</dbReference>
<dbReference type="SUPFAM" id="SSF46785">
    <property type="entry name" value="Winged helix' DNA-binding domain"/>
    <property type="match status" value="1"/>
</dbReference>
<dbReference type="PROSITE" id="PS50995">
    <property type="entry name" value="HTH_MARR_2"/>
    <property type="match status" value="1"/>
</dbReference>
<sequence>MRQLAKDINAFLNEVILQAENQHEILIGHCTSEVALTNTQEHILMLLSEESLTNSELARRLNVSQAAVTKAIKSLVKEGMLETSKDSKDARVIFYQLTDLARPIAEEHHHHHEHTLLTYEQVATQFTPNEQKVIQRFLTALVGEIK</sequence>
<feature type="chain" id="PRO_0000425609" description="Transcriptional regulator AdcR">
    <location>
        <begin position="1"/>
        <end position="146"/>
    </location>
</feature>
<feature type="domain" description="HTH marR-type" evidence="1">
    <location>
        <begin position="1"/>
        <end position="143"/>
    </location>
</feature>
<feature type="DNA-binding region" description="H-T-H motif" evidence="1">
    <location>
        <begin position="54"/>
        <end position="77"/>
    </location>
</feature>
<feature type="binding site" evidence="4">
    <location>
        <position position="24"/>
    </location>
    <ligand>
        <name>Zn(2+)</name>
        <dbReference type="ChEBI" id="CHEBI:29105"/>
        <label>1</label>
    </ligand>
</feature>
<feature type="binding site" evidence="4">
    <location>
        <position position="30"/>
    </location>
    <ligand>
        <name>Zn(2+)</name>
        <dbReference type="ChEBI" id="CHEBI:29105"/>
        <label>2</label>
    </ligand>
</feature>
<feature type="binding site" evidence="4">
    <location>
        <position position="41"/>
    </location>
    <ligand>
        <name>Zn(2+)</name>
        <dbReference type="ChEBI" id="CHEBI:29105"/>
        <label>2</label>
    </ligand>
</feature>
<feature type="binding site" evidence="4">
    <location>
        <position position="42"/>
    </location>
    <ligand>
        <name>Zn(2+)</name>
        <dbReference type="ChEBI" id="CHEBI:29105"/>
        <label>1</label>
    </ligand>
</feature>
<feature type="binding site" evidence="4">
    <location>
        <position position="107"/>
    </location>
    <ligand>
        <name>Zn(2+)</name>
        <dbReference type="ChEBI" id="CHEBI:29105"/>
        <label>2</label>
    </ligand>
</feature>
<feature type="binding site" evidence="4">
    <location>
        <position position="108"/>
    </location>
    <ligand>
        <name>Zn(2+)</name>
        <dbReference type="ChEBI" id="CHEBI:29105"/>
        <label>1</label>
    </ligand>
</feature>
<feature type="binding site" evidence="4">
    <location>
        <position position="112"/>
    </location>
    <ligand>
        <name>Zn(2+)</name>
        <dbReference type="ChEBI" id="CHEBI:29105"/>
        <label>1</label>
    </ligand>
</feature>
<feature type="mutagenesis site" description="Does not affect cellular zinc concentration." evidence="2">
    <original>C</original>
    <variation>A</variation>
    <location>
        <position position="30"/>
    </location>
</feature>
<feature type="mutagenesis site" description="Strong decrease in zinc binding." evidence="2">
    <original>H</original>
    <variation>A</variation>
    <location>
        <position position="42"/>
    </location>
</feature>
<feature type="mutagenesis site" description="Strong decrease in zinc binding. Increases cellular zinc concentration." evidence="2">
    <original>H</original>
    <variation>Q</variation>
    <location>
        <position position="108"/>
    </location>
</feature>
<feature type="mutagenesis site" description="Does not affect cellular zinc concentration." evidence="2">
    <original>H</original>
    <variation>Q</variation>
    <location>
        <position position="111"/>
    </location>
</feature>
<feature type="mutagenesis site" description="Strong decrease in zinc binding. Increases cellular zinc concentration." evidence="2">
    <original>H</original>
    <variation>Q</variation>
    <location>
        <position position="112"/>
    </location>
</feature>
<feature type="helix" evidence="6">
    <location>
        <begin position="3"/>
        <end position="18"/>
    </location>
</feature>
<feature type="turn" evidence="6">
    <location>
        <begin position="19"/>
        <end position="21"/>
    </location>
</feature>
<feature type="helix" evidence="6">
    <location>
        <begin position="38"/>
        <end position="47"/>
    </location>
</feature>
<feature type="helix" evidence="6">
    <location>
        <begin position="54"/>
        <end position="61"/>
    </location>
</feature>
<feature type="helix" evidence="6">
    <location>
        <begin position="65"/>
        <end position="77"/>
    </location>
</feature>
<feature type="strand" evidence="6">
    <location>
        <begin position="80"/>
        <end position="82"/>
    </location>
</feature>
<feature type="strand" evidence="6">
    <location>
        <begin position="91"/>
        <end position="93"/>
    </location>
</feature>
<feature type="helix" evidence="6">
    <location>
        <begin position="99"/>
        <end position="101"/>
    </location>
</feature>
<feature type="helix" evidence="6">
    <location>
        <begin position="102"/>
        <end position="123"/>
    </location>
</feature>
<feature type="helix" evidence="6">
    <location>
        <begin position="128"/>
        <end position="144"/>
    </location>
</feature>
<comment type="function">
    <text evidence="2 3">Zinc-responsive regulator that acts both as a repressor and as an activator by regulating directly the promoters of its target genes. In the presence of zinc, directly represses the expression of the adcRCBA operon, of genes coding for a group of surface antigen zinc-binding pneumococcal histidine triad proteins (PhtA, PhtB, PhtD and PhtE), and of adcAII. Can also activate expression of adh.</text>
</comment>
<comment type="activity regulation">
    <text>Zinc acts as a coregulator and is required for DNA-binding activity (PubMed:20804771, PubMed:21603707).</text>
</comment>
<comment type="subunit">
    <text evidence="2 4">Homodimer.</text>
</comment>
<comment type="miscellaneous">
    <text evidence="5">The second zinc-binding site seems to play no significant role in the regulatory process. Its function is unknown (PubMed:22085181).</text>
</comment>
<proteinExistence type="evidence at protein level"/>
<organism>
    <name type="scientific">Streptococcus pneumoniae serotype 2 (strain D39 / NCTC 7466)</name>
    <dbReference type="NCBI Taxonomy" id="373153"/>
    <lineage>
        <taxon>Bacteria</taxon>
        <taxon>Bacillati</taxon>
        <taxon>Bacillota</taxon>
        <taxon>Bacilli</taxon>
        <taxon>Lactobacillales</taxon>
        <taxon>Streptococcaceae</taxon>
        <taxon>Streptococcus</taxon>
    </lineage>
</organism>
<reference key="1">
    <citation type="journal article" date="2007" name="J. Bacteriol.">
        <title>Genome sequence of Avery's virulent serotype 2 strain D39 of Streptococcus pneumoniae and comparison with that of unencapsulated laboratory strain R6.</title>
        <authorList>
            <person name="Lanie J.A."/>
            <person name="Ng W.-L."/>
            <person name="Kazmierczak K.M."/>
            <person name="Andrzejewski T.M."/>
            <person name="Davidsen T.M."/>
            <person name="Wayne K.J."/>
            <person name="Tettelin H."/>
            <person name="Glass J.I."/>
            <person name="Winkler M.E."/>
        </authorList>
    </citation>
    <scope>NUCLEOTIDE SEQUENCE [LARGE SCALE GENOMIC DNA]</scope>
    <source>
        <strain>D39 / NCTC 7466</strain>
    </source>
</reference>
<reference key="2">
    <citation type="journal article" date="2010" name="J. Mol. Biol.">
        <title>The metalloregulatory zinc site in Streptococcus pneumoniae AdcR, a zinc-activated MarR family repressor.</title>
        <authorList>
            <person name="Reyes-Caballero H."/>
            <person name="Guerra A.J."/>
            <person name="Jacobsen F.E."/>
            <person name="Kazmierczak K.M."/>
            <person name="Cowart D."/>
            <person name="Koppolu U.M."/>
            <person name="Scott R.A."/>
            <person name="Winkler M.E."/>
            <person name="Giedroc D.P."/>
        </authorList>
    </citation>
    <scope>FUNCTION</scope>
    <scope>DNA-BINDING</scope>
    <scope>REGULATION</scope>
    <scope>SUBUNIT</scope>
    <scope>ZINC-BINDING</scope>
    <scope>MUTAGENESIS OF CYS-30; HIS-42; HIS-108; HIS-111 AND HIS-112</scope>
    <source>
        <strain>D39 / NCTC 7466</strain>
    </source>
</reference>
<reference key="3">
    <citation type="journal article" date="2011" name="Metallomics">
        <title>Transcriptional response of Streptococcus pneumoniae to Zn(2+) limitation and the repressor/activator function of AdcR.</title>
        <authorList>
            <person name="Shafeeq S."/>
            <person name="Kloosterman T.G."/>
            <person name="Kuipers O.P."/>
        </authorList>
    </citation>
    <scope>FUNCTION</scope>
    <scope>DNA-BINDING</scope>
    <scope>REGULATION</scope>
    <source>
        <strain>D39 / NCTC 7466</strain>
    </source>
</reference>
<reference key="4">
    <citation type="journal article" date="2011" name="J. Am. Chem. Soc.">
        <title>Crystal structure of the zinc-dependent MarR family transcriptional regulator AdcR in the Zn(II)-bound state.</title>
        <authorList>
            <person name="Guerra A.J."/>
            <person name="Dann C.E."/>
            <person name="Giedroc D.P."/>
        </authorList>
    </citation>
    <scope>X-RAY CRYSTALLOGRAPHY (2.00 ANGSTROMS) IN COMPLEX WITH ZINC</scope>
    <scope>SUBUNIT</scope>
</reference>
<keyword id="KW-0002">3D-structure</keyword>
<keyword id="KW-0010">Activator</keyword>
<keyword id="KW-0238">DNA-binding</keyword>
<keyword id="KW-0479">Metal-binding</keyword>
<keyword id="KW-1185">Reference proteome</keyword>
<keyword id="KW-0678">Repressor</keyword>
<keyword id="KW-0804">Transcription</keyword>
<keyword id="KW-0805">Transcription regulation</keyword>
<keyword id="KW-0862">Zinc</keyword>
<protein>
    <recommendedName>
        <fullName>Transcriptional regulator AdcR</fullName>
    </recommendedName>
</protein>
<accession>Q04I02</accession>
<gene>
    <name type="primary">adcR</name>
    <name type="ordered locus">SPD_2000</name>
</gene>
<name>ADCR_STRP2</name>